<comment type="function">
    <text>This enzyme hydrolyzes cefotaxime, ceftazidime and other broad spectrum cephalosporins.</text>
</comment>
<comment type="catalytic activity">
    <reaction evidence="2">
        <text>a beta-lactam + H2O = a substituted beta-amino acid</text>
        <dbReference type="Rhea" id="RHEA:20401"/>
        <dbReference type="ChEBI" id="CHEBI:15377"/>
        <dbReference type="ChEBI" id="CHEBI:35627"/>
        <dbReference type="ChEBI" id="CHEBI:140347"/>
        <dbReference type="EC" id="3.5.2.6"/>
    </reaction>
</comment>
<comment type="miscellaneous">
    <text evidence="4">The class A beta-lactamase family has a specific amino-acid numbering system, sometimes called Ambler or ABL numbering and often misspelt as Amber. A multiple sequence alignment was used to derive a consensus sequence and then the consensus was numbered taking into account insertions and deletions. This allows use of identical numbers, e.g. for active site residues, despite differences in protein length. UniProt always uses natural numbering of residues, hence there appear to be differences in numbering between this entry and some papers.</text>
</comment>
<comment type="similarity">
    <text evidence="3">Belongs to the class-A beta-lactamase family.</text>
</comment>
<dbReference type="EC" id="3.5.2.6"/>
<dbReference type="EMBL" id="X62115">
    <property type="protein sequence ID" value="CAA44025.1"/>
    <property type="molecule type" value="Genomic_DNA"/>
</dbReference>
<dbReference type="EMBL" id="X53817">
    <property type="protein sequence ID" value="CAA37813.1"/>
    <property type="molecule type" value="Genomic_DNA"/>
</dbReference>
<dbReference type="EMBL" id="X84314">
    <property type="protein sequence ID" value="CAA59058.1"/>
    <property type="molecule type" value="Genomic_DNA"/>
</dbReference>
<dbReference type="EMBL" id="X98102">
    <property type="protein sequence ID" value="CAA66730.1"/>
    <property type="molecule type" value="Genomic_DNA"/>
</dbReference>
<dbReference type="RefSeq" id="WP_032488413.1">
    <property type="nucleotide sequence ID" value="NG_050067.1"/>
</dbReference>
<dbReference type="RefSeq" id="YP_001966240.1">
    <property type="nucleotide sequence ID" value="NC_010886.1"/>
</dbReference>
<dbReference type="SMR" id="P0A9Z8"/>
<dbReference type="KEGG" id="ag:CAA37813"/>
<dbReference type="GO" id="GO:0008800">
    <property type="term" value="F:beta-lactamase activity"/>
    <property type="evidence" value="ECO:0007669"/>
    <property type="project" value="UniProtKB-EC"/>
</dbReference>
<dbReference type="GO" id="GO:0030655">
    <property type="term" value="P:beta-lactam antibiotic catabolic process"/>
    <property type="evidence" value="ECO:0007669"/>
    <property type="project" value="InterPro"/>
</dbReference>
<dbReference type="GO" id="GO:0046677">
    <property type="term" value="P:response to antibiotic"/>
    <property type="evidence" value="ECO:0007669"/>
    <property type="project" value="UniProtKB-KW"/>
</dbReference>
<dbReference type="Gene3D" id="3.40.710.10">
    <property type="entry name" value="DD-peptidase/beta-lactamase superfamily"/>
    <property type="match status" value="1"/>
</dbReference>
<dbReference type="InterPro" id="IPR012338">
    <property type="entry name" value="Beta-lactam/transpept-like"/>
</dbReference>
<dbReference type="InterPro" id="IPR045155">
    <property type="entry name" value="Beta-lactam_cat"/>
</dbReference>
<dbReference type="InterPro" id="IPR000871">
    <property type="entry name" value="Beta-lactam_class-A"/>
</dbReference>
<dbReference type="InterPro" id="IPR023650">
    <property type="entry name" value="Beta-lactam_class-A_AS"/>
</dbReference>
<dbReference type="NCBIfam" id="NF033103">
    <property type="entry name" value="bla_class_A"/>
    <property type="match status" value="1"/>
</dbReference>
<dbReference type="NCBIfam" id="NF000285">
    <property type="entry name" value="SHV"/>
    <property type="match status" value="1"/>
</dbReference>
<dbReference type="NCBIfam" id="NF012143">
    <property type="entry name" value="SHV_LEN_OKP"/>
    <property type="match status" value="1"/>
</dbReference>
<dbReference type="PANTHER" id="PTHR35333">
    <property type="entry name" value="BETA-LACTAMASE"/>
    <property type="match status" value="1"/>
</dbReference>
<dbReference type="PANTHER" id="PTHR35333:SF3">
    <property type="entry name" value="BETA-LACTAMASE-TYPE TRANSPEPTIDASE FOLD CONTAINING PROTEIN"/>
    <property type="match status" value="1"/>
</dbReference>
<dbReference type="Pfam" id="PF13354">
    <property type="entry name" value="Beta-lactamase2"/>
    <property type="match status" value="1"/>
</dbReference>
<dbReference type="PRINTS" id="PR00118">
    <property type="entry name" value="BLACTAMASEA"/>
</dbReference>
<dbReference type="SUPFAM" id="SSF56601">
    <property type="entry name" value="beta-lactamase/transpeptidase-like"/>
    <property type="match status" value="1"/>
</dbReference>
<dbReference type="PROSITE" id="PS00146">
    <property type="entry name" value="BETA_LACTAMASE_A"/>
    <property type="match status" value="1"/>
</dbReference>
<proteinExistence type="inferred from homology"/>
<sequence length="286" mass="31269">MRYIRLCIISLLATLPLAVHASPQPLEQIKQSESQLSGRVGMIEMDLASGRTLTAWRADERFPMMSTFKVVLCGAVLARVDAGDEQLERKIHYRQQDLVDYSPVSEKHLADGMTVGELCAAAITMSDNSAANLLLATVGGPAGLTAFLRQIGDNVTRLDRWETELNEALPGDARDTTTPASMAATLRKLLTSQRLSARSQRQLLQWMVDDRVAGPLIRSVLPAGWFIADKTGASERGARGIVALLGPNNKAERIVVIYLRDTPASMAERNQQIAGIGAALIEHWQR</sequence>
<protein>
    <recommendedName>
        <fullName>Beta-lactamase SHV-2</fullName>
        <ecNumber>3.5.2.6</ecNumber>
    </recommendedName>
    <alternativeName>
        <fullName>SHV-2A</fullName>
    </alternativeName>
</protein>
<evidence type="ECO:0000250" key="1"/>
<evidence type="ECO:0000255" key="2">
    <source>
        <dbReference type="PROSITE-ProRule" id="PRU10101"/>
    </source>
</evidence>
<evidence type="ECO:0000305" key="3"/>
<evidence type="ECO:0000305" key="4">
    <source>
    </source>
</evidence>
<gene>
    <name type="primary">bla</name>
    <name type="synonym">shv2</name>
</gene>
<geneLocation type="plasmid">
    <name>pZMP1</name>
</geneLocation>
<name>BLA2_KLEPN</name>
<keyword id="KW-0046">Antibiotic resistance</keyword>
<keyword id="KW-1015">Disulfide bond</keyword>
<keyword id="KW-0378">Hydrolase</keyword>
<keyword id="KW-0614">Plasmid</keyword>
<keyword id="KW-0732">Signal</keyword>
<accession>P0A9Z8</accession>
<accession>P14558</accession>
<reference key="1">
    <citation type="journal article" date="1990" name="J. Bacteriol.">
        <title>Direct involvement of IS26 in an antibiotic resistance operon.</title>
        <authorList>
            <person name="Lee K.Y."/>
            <person name="Hopkins J.D."/>
            <person name="Syvanen M."/>
        </authorList>
    </citation>
    <scope>NUCLEOTIDE SEQUENCE [GENOMIC DNA]</scope>
</reference>
<reference key="2">
    <citation type="journal article" date="1991" name="J. Gen. Microbiol.">
        <title>Molecular characterization of a new plasmid-encoded SHV-type beta-lactamase (SHV-2 variant) conferring high-level cefotaxime resistance upon Klebsiella pneumoniae.</title>
        <authorList>
            <person name="Podbielski A."/>
            <person name="Schoenling J."/>
            <person name="Melzer B."/>
            <person name="Warnatz K."/>
            <person name="Leusch H.G."/>
        </authorList>
    </citation>
    <scope>NUCLEOTIDE SEQUENCE [GENOMIC DNA]</scope>
    <source>
        <strain>KPR 14</strain>
        <plasmid>pZMP1</plasmid>
    </source>
</reference>
<reference key="3">
    <citation type="journal article" date="1995" name="Antimicrob. Agents Chemother.">
        <title>New system based on site-directed mutagenesis for highly accurate comparison of resistance levels conferred by SHV beta-lactamases.</title>
        <authorList>
            <person name="Nuesch-Inderbinen M."/>
            <person name="Hachler H."/>
            <person name="Kayser F.H."/>
        </authorList>
    </citation>
    <scope>NUCLEOTIDE SEQUENCE [GENOMIC DNA]</scope>
    <source>
        <strain>KPZU-3</strain>
    </source>
</reference>
<reference key="4">
    <citation type="journal article" date="1997" name="Antimicrob. Agents Chemother.">
        <title>Survey and molecular genetics of SHV beta-lactamases in Enterobacteriaceae in Switzerland: two novel enzymes, SHV-11 and SHV-12.</title>
        <authorList>
            <person name="Nuesch-Inderbinen M."/>
            <person name="Kayser F.H."/>
            <person name="Hachler H."/>
        </authorList>
    </citation>
    <scope>NUCLEOTIDE SEQUENCE [GENOMIC DNA]</scope>
    <source>
        <strain>KPLA-10</strain>
    </source>
</reference>
<reference key="5">
    <citation type="journal article" date="1991" name="Biochem. J.">
        <title>A standard numbering scheme for the class A beta-lactamases.</title>
        <authorList>
            <person name="Ambler R.P."/>
            <person name="Coulson A.F."/>
            <person name="Frere J.M."/>
            <person name="Ghuysen J.M."/>
            <person name="Joris B."/>
            <person name="Forsman M."/>
            <person name="Levesque R.C."/>
            <person name="Tiraby G."/>
            <person name="Waley S.G."/>
        </authorList>
    </citation>
    <scope>AMINO ACID NUMBERING SCHEME</scope>
</reference>
<feature type="signal peptide" evidence="1">
    <location>
        <begin position="1"/>
        <end position="21"/>
    </location>
</feature>
<feature type="chain" id="PRO_0000041957" description="Beta-lactamase SHV-2">
    <location>
        <begin position="22"/>
        <end position="286"/>
    </location>
</feature>
<feature type="active site" description="Acyl-ester intermediate" evidence="2">
    <location>
        <position position="66"/>
    </location>
</feature>
<feature type="active site" description="Proton acceptor" evidence="1">
    <location>
        <position position="164"/>
    </location>
</feature>
<feature type="binding site" evidence="1">
    <location>
        <begin position="230"/>
        <end position="232"/>
    </location>
    <ligand>
        <name>substrate</name>
    </ligand>
</feature>
<feature type="disulfide bond" evidence="1">
    <location>
        <begin position="73"/>
        <end position="119"/>
    </location>
</feature>
<feature type="sequence conflict" description="In Ref. 1; CAA44025." evidence="3" ref="1">
    <original>Q</original>
    <variation>L</variation>
    <location>
        <position position="31"/>
    </location>
</feature>
<organism>
    <name type="scientific">Klebsiella pneumoniae</name>
    <dbReference type="NCBI Taxonomy" id="573"/>
    <lineage>
        <taxon>Bacteria</taxon>
        <taxon>Pseudomonadati</taxon>
        <taxon>Pseudomonadota</taxon>
        <taxon>Gammaproteobacteria</taxon>
        <taxon>Enterobacterales</taxon>
        <taxon>Enterobacteriaceae</taxon>
        <taxon>Klebsiella/Raoultella group</taxon>
        <taxon>Klebsiella</taxon>
        <taxon>Klebsiella pneumoniae complex</taxon>
    </lineage>
</organism>